<gene>
    <name type="primary">cpcF</name>
    <name type="ordered locus">sll1051</name>
</gene>
<comment type="function">
    <text evidence="1">Required for the chromophorylation of the cpcA gene product.</text>
</comment>
<comment type="subunit">
    <text evidence="1">CpcE and CpcF associate to form a lyase.</text>
</comment>
<comment type="similarity">
    <text evidence="2">Belongs to the CpcE/RpcE/PecE family.</text>
</comment>
<organism>
    <name type="scientific">Synechocystis sp. (strain ATCC 27184 / PCC 6803 / Kazusa)</name>
    <dbReference type="NCBI Taxonomy" id="1111708"/>
    <lineage>
        <taxon>Bacteria</taxon>
        <taxon>Bacillati</taxon>
        <taxon>Cyanobacteriota</taxon>
        <taxon>Cyanophyceae</taxon>
        <taxon>Synechococcales</taxon>
        <taxon>Merismopediaceae</taxon>
        <taxon>Synechocystis</taxon>
    </lineage>
</organism>
<feature type="chain" id="PRO_0000199282" description="Phycocyanin alpha phycocyanobilin lyase CpcF">
    <location>
        <begin position="1"/>
        <end position="214"/>
    </location>
</feature>
<evidence type="ECO:0000250" key="1"/>
<evidence type="ECO:0000305" key="2"/>
<proteinExistence type="inferred from homology"/>
<name>CPCF_SYNY3</name>
<sequence>MEGNSVVTPEIERLIQAVETADSAAKLVGAVRALAATRSPLAVPQLTTVLRYNNPGAAVAAVDGLIQIGDAAMTHLLANMDGYNYGARAWATRACAGIGDPRALALLQEAALTDFALSVRRAAAKGLGFLRWQSLPQEEQETVQKAIYDTLIQVCEDPEWVVRYGAIAGLENLAKQAQHYRQPLKDFLQSFVEQEPEAIVGERILWTLENIGPI</sequence>
<protein>
    <recommendedName>
        <fullName>Phycocyanin alpha phycocyanobilin lyase CpcF</fullName>
    </recommendedName>
</protein>
<keyword id="KW-0042">Antenna complex</keyword>
<keyword id="KW-0456">Lyase</keyword>
<keyword id="KW-0605">Phycobilisome</keyword>
<keyword id="KW-1185">Reference proteome</keyword>
<dbReference type="EMBL" id="BA000022">
    <property type="protein sequence ID" value="BAA16654.1"/>
    <property type="molecule type" value="Genomic_DNA"/>
</dbReference>
<dbReference type="PIR" id="S74502">
    <property type="entry name" value="S74502"/>
</dbReference>
<dbReference type="SMR" id="P72652"/>
<dbReference type="STRING" id="1148.gene:10497509"/>
<dbReference type="PaxDb" id="1148-1651726"/>
<dbReference type="EnsemblBacteria" id="BAA16654">
    <property type="protein sequence ID" value="BAA16654"/>
    <property type="gene ID" value="BAA16654"/>
</dbReference>
<dbReference type="KEGG" id="syn:sll1051"/>
<dbReference type="eggNOG" id="COG1413">
    <property type="taxonomic scope" value="Bacteria"/>
</dbReference>
<dbReference type="InParanoid" id="P72652"/>
<dbReference type="PhylomeDB" id="P72652"/>
<dbReference type="BRENDA" id="4.4.1.32">
    <property type="organism ID" value="382"/>
</dbReference>
<dbReference type="Proteomes" id="UP000001425">
    <property type="component" value="Chromosome"/>
</dbReference>
<dbReference type="GO" id="GO:0030089">
    <property type="term" value="C:phycobilisome"/>
    <property type="evidence" value="ECO:0007669"/>
    <property type="project" value="UniProtKB-KW"/>
</dbReference>
<dbReference type="GO" id="GO:0016829">
    <property type="term" value="F:lyase activity"/>
    <property type="evidence" value="ECO:0007669"/>
    <property type="project" value="UniProtKB-KW"/>
</dbReference>
<dbReference type="Gene3D" id="1.25.10.10">
    <property type="entry name" value="Leucine-rich Repeat Variant"/>
    <property type="match status" value="1"/>
</dbReference>
<dbReference type="InterPro" id="IPR011989">
    <property type="entry name" value="ARM-like"/>
</dbReference>
<dbReference type="InterPro" id="IPR016024">
    <property type="entry name" value="ARM-type_fold"/>
</dbReference>
<dbReference type="Pfam" id="PF13646">
    <property type="entry name" value="HEAT_2"/>
    <property type="match status" value="1"/>
</dbReference>
<dbReference type="SUPFAM" id="SSF48371">
    <property type="entry name" value="ARM repeat"/>
    <property type="match status" value="1"/>
</dbReference>
<reference key="1">
    <citation type="journal article" date="1996" name="DNA Res.">
        <title>Sequence analysis of the genome of the unicellular cyanobacterium Synechocystis sp. strain PCC6803. II. Sequence determination of the entire genome and assignment of potential protein-coding regions.</title>
        <authorList>
            <person name="Kaneko T."/>
            <person name="Sato S."/>
            <person name="Kotani H."/>
            <person name="Tanaka A."/>
            <person name="Asamizu E."/>
            <person name="Nakamura Y."/>
            <person name="Miyajima N."/>
            <person name="Hirosawa M."/>
            <person name="Sugiura M."/>
            <person name="Sasamoto S."/>
            <person name="Kimura T."/>
            <person name="Hosouchi T."/>
            <person name="Matsuno A."/>
            <person name="Muraki A."/>
            <person name="Nakazaki N."/>
            <person name="Naruo K."/>
            <person name="Okumura S."/>
            <person name="Shimpo S."/>
            <person name="Takeuchi C."/>
            <person name="Wada T."/>
            <person name="Watanabe A."/>
            <person name="Yamada M."/>
            <person name="Yasuda M."/>
            <person name="Tabata S."/>
        </authorList>
    </citation>
    <scope>NUCLEOTIDE SEQUENCE [LARGE SCALE GENOMIC DNA]</scope>
    <source>
        <strain>ATCC 27184 / PCC 6803 / Kazusa</strain>
    </source>
</reference>
<accession>P72652</accession>